<dbReference type="EC" id="4.2.1.159" evidence="1 2"/>
<dbReference type="EMBL" id="AJ223998">
    <property type="protein sequence ID" value="CAA11763.1"/>
    <property type="molecule type" value="Genomic_DNA"/>
</dbReference>
<dbReference type="PIR" id="T17472">
    <property type="entry name" value="T17472"/>
</dbReference>
<dbReference type="PDB" id="4J7G">
    <property type="method" value="X-ray"/>
    <property type="resolution" value="1.70 A"/>
    <property type="chains" value="A/B=1-471"/>
</dbReference>
<dbReference type="PDB" id="4J7H">
    <property type="method" value="X-ray"/>
    <property type="resolution" value="1.69 A"/>
    <property type="chains" value="A/B=1-471"/>
</dbReference>
<dbReference type="PDBsum" id="4J7G"/>
<dbReference type="PDBsum" id="4J7H"/>
<dbReference type="SMR" id="O52793"/>
<dbReference type="STRING" id="31958.SD37_33630"/>
<dbReference type="BioCyc" id="MetaCyc:MONOMER-18438"/>
<dbReference type="BRENDA" id="4.2.1.159">
    <property type="organism ID" value="315"/>
</dbReference>
<dbReference type="EvolutionaryTrace" id="O52793"/>
<dbReference type="GO" id="GO:0016829">
    <property type="term" value="F:lyase activity"/>
    <property type="evidence" value="ECO:0007669"/>
    <property type="project" value="UniProtKB-KW"/>
</dbReference>
<dbReference type="GO" id="GO:0017000">
    <property type="term" value="P:antibiotic biosynthetic process"/>
    <property type="evidence" value="ECO:0007669"/>
    <property type="project" value="UniProtKB-KW"/>
</dbReference>
<dbReference type="Gene3D" id="3.90.79.40">
    <property type="entry name" value="EvaA sugar 2,3-dehydratase subunit"/>
    <property type="match status" value="3"/>
</dbReference>
<dbReference type="InterPro" id="IPR005212">
    <property type="entry name" value="EvaA-like"/>
</dbReference>
<dbReference type="InterPro" id="IPR038153">
    <property type="entry name" value="EvaA-like_sf"/>
</dbReference>
<dbReference type="Pfam" id="PF03559">
    <property type="entry name" value="Hexose_dehydrat"/>
    <property type="match status" value="2"/>
</dbReference>
<sequence length="471" mass="53023">MSSFVVPSLTAVRPRDHHDYADRIALSAATTDGVQMRTEDVRAWIAERRDANVFHVERIPFADLDQWWFEGVTGNLVHRSGRFFTIEGLHVIEHDGPHGDGPYREWQQPVIRQPEVGILGILAKEFDGVLHFLMQAKMEPGNPNLVQLSPTVQATRSNYTKAHGGTNVKLIEYFAPPDPERVIVDVLQAEQGSWFFRKSNRNMIVETVDDVPLWDDFCWLTLGQIAELMHEDETINMNSRSVLSCLPYQDITPRALFSDVQLLSWFTNERSRHDVRVRRIPLADVCGWKQGAEEIEHEDGRYFKVLAVAVKGSNREKISWTQPLVESVDLGVVAFLVRKIDGVPHVLVQARVDGGFLDTVELAPTVQCTPLNYAHLPAEERPPFLDLVQNAPRSRIRYEAIHSEEGGRFLGVRARYLVIDADEAIDPPPGYAWVTPAQLTALTRHGHYVNVEARTLLACINAAAAQPRGGA</sequence>
<organism>
    <name type="scientific">Amycolatopsis orientalis</name>
    <name type="common">Nocardia orientalis</name>
    <dbReference type="NCBI Taxonomy" id="31958"/>
    <lineage>
        <taxon>Bacteria</taxon>
        <taxon>Bacillati</taxon>
        <taxon>Actinomycetota</taxon>
        <taxon>Actinomycetes</taxon>
        <taxon>Pseudonocardiales</taxon>
        <taxon>Pseudonocardiaceae</taxon>
        <taxon>Amycolatopsis</taxon>
    </lineage>
</organism>
<gene>
    <name evidence="3" type="primary">evaA</name>
    <name evidence="3" type="synonym">Orf23</name>
</gene>
<keyword id="KW-0002">3D-structure</keyword>
<keyword id="KW-0045">Antibiotic biosynthesis</keyword>
<keyword id="KW-1015">Disulfide bond</keyword>
<keyword id="KW-0456">Lyase</keyword>
<reference key="1">
    <citation type="journal article" date="1998" name="Chem. Biol.">
        <title>Sequencing and analysis of genes involved in the biosynthesis of a vancomycin group antibiotic.</title>
        <authorList>
            <person name="van Wageningen A."/>
            <person name="Kirkpatrick P."/>
            <person name="Williams D."/>
            <person name="Harris B."/>
            <person name="Kershaw J."/>
            <person name="Lennard N."/>
            <person name="Jones M."/>
            <person name="Jones S."/>
            <person name="Solenberg P."/>
        </authorList>
    </citation>
    <scope>NUCLEOTIDE SEQUENCE [GENOMIC DNA]</scope>
</reference>
<reference key="2">
    <citation type="journal article" date="2000" name="Proc. Natl. Acad. Sci. U.S.A.">
        <title>Deoxysugars in glycopeptide antibiotics: enzymatic synthesis of TDP-L-epivancosamine in chloroeremomycin biosynthesis.</title>
        <authorList>
            <person name="Chen H."/>
            <person name="Thomas M.G."/>
            <person name="Hubbard B.K."/>
            <person name="Losey H.C."/>
            <person name="Walsh C.T."/>
            <person name="Burkart M.D."/>
        </authorList>
    </citation>
    <scope>FUNCTION</scope>
    <scope>CATALYTIC ACTIVITY</scope>
    <scope>PATHWAY</scope>
</reference>
<reference key="3">
    <citation type="journal article" date="2013" name="Biochemistry">
        <title>Structure of EvaA: a paradigm for sugar 2,3-dehydratases.</title>
        <authorList>
            <person name="Kubiak R.L."/>
            <person name="Thoden J.B."/>
            <person name="Holden H.M."/>
        </authorList>
    </citation>
    <scope>X-RAY CRYSTALLOGRAPHY (1.69 ANGSTROMS) OF MUTANT ALA-381 IN COMPLEX WITH SUBSTRATE ANALOGS</scope>
    <scope>FUNCTION</scope>
    <scope>CATALYTIC ACTIVITY</scope>
    <scope>BIOPHYSICOCHEMICAL PROPERTIES</scope>
    <scope>MUTAGENESIS OF GLU-139; GLU-190; ASP-353; ARG-381; GLU-404; GLU-405 AND GLU-452</scope>
    <scope>DISULFIDE BONDS</scope>
    <scope>SUBUNIT</scope>
    <scope>REACTION MECHANISM</scope>
</reference>
<protein>
    <recommendedName>
        <fullName evidence="3">dTDP-4-dehydro-6-deoxy-alpha-D-glucopyranose 2,3-dehydratase</fullName>
        <ecNumber evidence="1 2">4.2.1.159</ecNumber>
    </recommendedName>
    <alternativeName>
        <fullName evidence="4">2,3-dehydratase</fullName>
    </alternativeName>
</protein>
<comment type="function">
    <text evidence="1 2">Involved in the biosynthesis of the 2,3,6-trideoxysugar L-epivancosamine, the terminal sugar added to the aglycone scaffold of chloroeremomycin, a member of the glycopeptide antibiotics vancomycin family. Catalyzes the removal of the hydroxyl group at position C-2 of the hexose ring of dTDP-4-dehydro-6-deoxy-alpha-D-glucopyranose, and the oxidation of the hydroxyl group at position C-3 to form a carbonyl functionality. The product of the reaction, dTDP-2,6-dideoxy-D-glycero-hex-2-enos-4-ulose, is a highly unstable diketosugar, which spontaneously forms dTDP-3,4-didehydro-2,6-dideoxy-alpha-D-glucose.</text>
</comment>
<comment type="catalytic activity">
    <reaction evidence="1 2">
        <text>dTDP-4-dehydro-6-deoxy-alpha-D-glucose = dTDP-3,4-didehydro-2,6-dideoxy-alpha-D-glucose + H2O</text>
        <dbReference type="Rhea" id="RHEA:47972"/>
        <dbReference type="ChEBI" id="CHEBI:15377"/>
        <dbReference type="ChEBI" id="CHEBI:57649"/>
        <dbReference type="ChEBI" id="CHEBI:84540"/>
        <dbReference type="EC" id="4.2.1.159"/>
    </reaction>
</comment>
<comment type="biophysicochemical properties">
    <kinetics>
        <KM evidence="2">56 uM for dTDP-glucose</KM>
        <Vmax evidence="2">4.0 umol/min/mg enzyme for dTDP-glucose</Vmax>
    </kinetics>
</comment>
<comment type="pathway">
    <text evidence="6">Antibiotic biosynthesis.</text>
</comment>
<comment type="subunit">
    <text evidence="2">Homodimer.</text>
</comment>
<comment type="miscellaneous">
    <text evidence="2">The mutant Ala-381 is used to improve the quality of the crystals.</text>
</comment>
<comment type="miscellaneous">
    <text evidence="2">Two binding sites (pockets A and B) for the dTDP-sugar ligands have been identified in each subunit. It seems that pocket A represents the active site and pocket B is a vestige of the gene duplication event.</text>
</comment>
<comment type="similarity">
    <text evidence="5">Belongs to the hexose 2,3-dehydratase family.</text>
</comment>
<feature type="chain" id="PRO_0000444212" description="dTDP-4-dehydro-6-deoxy-alpha-D-glucopyranose 2,3-dehydratase">
    <location>
        <begin position="1"/>
        <end position="471"/>
    </location>
</feature>
<feature type="binding site" description="from pocket A" evidence="7 8">
    <location>
        <position position="67"/>
    </location>
    <ligand>
        <name>dTDP-4-dehydro-6-deoxy-alpha-D-glucose</name>
        <dbReference type="ChEBI" id="CHEBI:57649"/>
        <label>1</label>
    </ligand>
</feature>
<feature type="binding site" description="from pocket A" evidence="7 8">
    <location>
        <begin position="155"/>
        <end position="159"/>
    </location>
    <ligand>
        <name>dTDP-4-dehydro-6-deoxy-alpha-D-glucose</name>
        <dbReference type="ChEBI" id="CHEBI:57649"/>
        <label>1</label>
    </ligand>
</feature>
<feature type="binding site" description="from pocket B" evidence="7 8 9">
    <location>
        <position position="193"/>
    </location>
    <ligand>
        <name>dTDP-4-dehydro-6-deoxy-alpha-D-glucose</name>
        <dbReference type="ChEBI" id="CHEBI:57649"/>
        <label>2</label>
    </ligand>
</feature>
<feature type="binding site" description="from pocket A" evidence="7 8">
    <location>
        <position position="238"/>
    </location>
    <ligand>
        <name>dTDP-4-dehydro-6-deoxy-alpha-D-glucose</name>
        <dbReference type="ChEBI" id="CHEBI:57649"/>
        <label>1</label>
    </ligand>
</feature>
<feature type="binding site" description="from pocket B" evidence="7 8 9">
    <location>
        <position position="288"/>
    </location>
    <ligand>
        <name>dTDP-4-dehydro-6-deoxy-alpha-D-glucose</name>
        <dbReference type="ChEBI" id="CHEBI:57649"/>
        <label>2</label>
    </ligand>
</feature>
<feature type="binding site" description="from pocket B" evidence="7 8 9">
    <location>
        <position position="351"/>
    </location>
    <ligand>
        <name>dTDP-4-dehydro-6-deoxy-alpha-D-glucose</name>
        <dbReference type="ChEBI" id="CHEBI:57649"/>
        <label>2</label>
    </ligand>
</feature>
<feature type="binding site" description="from pocket B" evidence="7 8 9">
    <location>
        <begin position="367"/>
        <end position="369"/>
    </location>
    <ligand>
        <name>dTDP-4-dehydro-6-deoxy-alpha-D-glucose</name>
        <dbReference type="ChEBI" id="CHEBI:57649"/>
        <label>2</label>
    </ligand>
</feature>
<feature type="binding site" description="from pocket B" evidence="7 8 9">
    <location>
        <begin position="372"/>
        <end position="373"/>
    </location>
    <ligand>
        <name>dTDP-4-dehydro-6-deoxy-alpha-D-glucose</name>
        <dbReference type="ChEBI" id="CHEBI:57649"/>
        <label>2</label>
    </ligand>
</feature>
<feature type="binding site" description="from pocket A" evidence="7 8">
    <location>
        <begin position="405"/>
        <end position="408"/>
    </location>
    <ligand>
        <name>dTDP-4-dehydro-6-deoxy-alpha-D-glucose</name>
        <dbReference type="ChEBI" id="CHEBI:57649"/>
        <label>1</label>
    </ligand>
</feature>
<feature type="disulfide bond" description="Interchain" evidence="2 8 9">
    <location>
        <position position="286"/>
    </location>
</feature>
<feature type="mutagenesis site" description="Loss of dehydratase activity." evidence="2">
    <original>E</original>
    <variation>Q</variation>
    <location>
        <position position="139"/>
    </location>
</feature>
<feature type="mutagenesis site" description="Loss of dehydratase activity." evidence="2">
    <original>E</original>
    <variation>A</variation>
    <variation>Q</variation>
    <location>
        <position position="190"/>
    </location>
</feature>
<feature type="mutagenesis site" description="Same dehydratase activity compared to the wild type." evidence="2">
    <original>D</original>
    <variation>A</variation>
    <location>
        <position position="353"/>
    </location>
</feature>
<feature type="mutagenesis site" description="The mutation has little effect on the overall catalytic efficiency of the enzyme." evidence="2">
    <original>R</original>
    <variation>A</variation>
    <location>
        <position position="381"/>
    </location>
</feature>
<feature type="mutagenesis site" description="Loss of dehydratase activity." evidence="2">
    <original>E</original>
    <variation>Q</variation>
    <location>
        <position position="404"/>
    </location>
</feature>
<feature type="mutagenesis site" description="Loss of dehydratase activity." evidence="2">
    <original>E</original>
    <variation>A</variation>
    <variation>Q</variation>
    <location>
        <position position="405"/>
    </location>
</feature>
<feature type="mutagenesis site" description="Loss of dehydratase activity." evidence="2">
    <original>E</original>
    <variation>A</variation>
    <location>
        <position position="452"/>
    </location>
</feature>
<feature type="mutagenesis site" description="Same dehydratase activity compared to the wild type." evidence="2">
    <original>E</original>
    <variation>Q</variation>
    <location>
        <position position="452"/>
    </location>
</feature>
<feature type="helix" evidence="10">
    <location>
        <begin position="21"/>
        <end position="29"/>
    </location>
</feature>
<feature type="helix" evidence="10">
    <location>
        <begin position="38"/>
        <end position="51"/>
    </location>
</feature>
<feature type="strand" evidence="10">
    <location>
        <begin position="55"/>
        <end position="59"/>
    </location>
</feature>
<feature type="helix" evidence="10">
    <location>
        <begin position="61"/>
        <end position="63"/>
    </location>
</feature>
<feature type="strand" evidence="10">
    <location>
        <begin position="65"/>
        <end position="69"/>
    </location>
</feature>
<feature type="turn" evidence="10">
    <location>
        <begin position="71"/>
        <end position="73"/>
    </location>
</feature>
<feature type="strand" evidence="10">
    <location>
        <begin position="76"/>
        <end position="78"/>
    </location>
</feature>
<feature type="strand" evidence="10">
    <location>
        <begin position="85"/>
        <end position="94"/>
    </location>
</feature>
<feature type="strand" evidence="10">
    <location>
        <begin position="104"/>
        <end position="112"/>
    </location>
</feature>
<feature type="strand" evidence="10">
    <location>
        <begin position="117"/>
        <end position="126"/>
    </location>
</feature>
<feature type="strand" evidence="10">
    <location>
        <begin position="129"/>
        <end position="138"/>
    </location>
</feature>
<feature type="strand" evidence="10">
    <location>
        <begin position="145"/>
        <end position="149"/>
    </location>
</feature>
<feature type="strand" evidence="10">
    <location>
        <begin position="151"/>
        <end position="154"/>
    </location>
</feature>
<feature type="helix" evidence="10">
    <location>
        <begin position="156"/>
        <end position="158"/>
    </location>
</feature>
<feature type="helix" evidence="10">
    <location>
        <begin position="171"/>
        <end position="173"/>
    </location>
</feature>
<feature type="helix" evidence="10">
    <location>
        <begin position="179"/>
        <end position="181"/>
    </location>
</feature>
<feature type="strand" evidence="10">
    <location>
        <begin position="182"/>
        <end position="189"/>
    </location>
</feature>
<feature type="turn" evidence="10">
    <location>
        <begin position="192"/>
        <end position="194"/>
    </location>
</feature>
<feature type="strand" evidence="10">
    <location>
        <begin position="195"/>
        <end position="197"/>
    </location>
</feature>
<feature type="strand" evidence="10">
    <location>
        <begin position="199"/>
        <end position="206"/>
    </location>
</feature>
<feature type="strand" evidence="10">
    <location>
        <begin position="217"/>
        <end position="221"/>
    </location>
</feature>
<feature type="helix" evidence="10">
    <location>
        <begin position="222"/>
        <end position="229"/>
    </location>
</feature>
<feature type="helix" evidence="10">
    <location>
        <begin position="237"/>
        <end position="244"/>
    </location>
</feature>
<feature type="helix" evidence="10">
    <location>
        <begin position="259"/>
        <end position="271"/>
    </location>
</feature>
<feature type="strand" evidence="10">
    <location>
        <begin position="274"/>
        <end position="280"/>
    </location>
</feature>
<feature type="helix" evidence="10">
    <location>
        <begin position="282"/>
        <end position="284"/>
    </location>
</feature>
<feature type="strand" evidence="10">
    <location>
        <begin position="288"/>
        <end position="290"/>
    </location>
</feature>
<feature type="strand" evidence="10">
    <location>
        <begin position="295"/>
        <end position="297"/>
    </location>
</feature>
<feature type="strand" evidence="10">
    <location>
        <begin position="302"/>
        <end position="311"/>
    </location>
</feature>
<feature type="strand" evidence="10">
    <location>
        <begin position="320"/>
        <end position="329"/>
    </location>
</feature>
<feature type="strand" evidence="10">
    <location>
        <begin position="331"/>
        <end position="340"/>
    </location>
</feature>
<feature type="strand" evidence="10">
    <location>
        <begin position="343"/>
        <end position="352"/>
    </location>
</feature>
<feature type="strand" evidence="10">
    <location>
        <begin position="359"/>
        <end position="363"/>
    </location>
</feature>
<feature type="strand" evidence="10">
    <location>
        <begin position="365"/>
        <end position="368"/>
    </location>
</feature>
<feature type="helix" evidence="10">
    <location>
        <begin position="370"/>
        <end position="373"/>
    </location>
</feature>
<feature type="helix" evidence="10">
    <location>
        <begin position="378"/>
        <end position="380"/>
    </location>
</feature>
<feature type="helix" evidence="10">
    <location>
        <begin position="385"/>
        <end position="389"/>
    </location>
</feature>
<feature type="helix" evidence="10">
    <location>
        <begin position="393"/>
        <end position="395"/>
    </location>
</feature>
<feature type="strand" evidence="10">
    <location>
        <begin position="396"/>
        <end position="403"/>
    </location>
</feature>
<feature type="turn" evidence="10">
    <location>
        <begin position="406"/>
        <end position="408"/>
    </location>
</feature>
<feature type="strand" evidence="10">
    <location>
        <begin position="409"/>
        <end position="411"/>
    </location>
</feature>
<feature type="strand" evidence="10">
    <location>
        <begin position="413"/>
        <end position="420"/>
    </location>
</feature>
<feature type="strand" evidence="10">
    <location>
        <begin position="431"/>
        <end position="434"/>
    </location>
</feature>
<feature type="helix" evidence="10">
    <location>
        <begin position="436"/>
        <end position="442"/>
    </location>
</feature>
<feature type="helix" evidence="10">
    <location>
        <begin position="451"/>
        <end position="465"/>
    </location>
</feature>
<evidence type="ECO:0000269" key="1">
    <source>
    </source>
</evidence>
<evidence type="ECO:0000269" key="2">
    <source>
    </source>
</evidence>
<evidence type="ECO:0000303" key="3">
    <source>
    </source>
</evidence>
<evidence type="ECO:0000303" key="4">
    <source>
    </source>
</evidence>
<evidence type="ECO:0000305" key="5"/>
<evidence type="ECO:0000305" key="6">
    <source>
    </source>
</evidence>
<evidence type="ECO:0000305" key="7">
    <source>
    </source>
</evidence>
<evidence type="ECO:0007744" key="8">
    <source>
        <dbReference type="PDB" id="4J7G"/>
    </source>
</evidence>
<evidence type="ECO:0007744" key="9">
    <source>
        <dbReference type="PDB" id="4J7H"/>
    </source>
</evidence>
<evidence type="ECO:0007829" key="10">
    <source>
        <dbReference type="PDB" id="4J7H"/>
    </source>
</evidence>
<accession>O52793</accession>
<proteinExistence type="evidence at protein level"/>
<name>EVAA_AMYOR</name>